<organism>
    <name type="scientific">Colobus polykomos</name>
    <name type="common">Western black-and-white colobus monkey</name>
    <dbReference type="NCBI Taxonomy" id="9572"/>
    <lineage>
        <taxon>Eukaryota</taxon>
        <taxon>Metazoa</taxon>
        <taxon>Chordata</taxon>
        <taxon>Craniata</taxon>
        <taxon>Vertebrata</taxon>
        <taxon>Euteleostomi</taxon>
        <taxon>Mammalia</taxon>
        <taxon>Eutheria</taxon>
        <taxon>Euarchontoglires</taxon>
        <taxon>Primates</taxon>
        <taxon>Haplorrhini</taxon>
        <taxon>Catarrhini</taxon>
        <taxon>Cercopithecidae</taxon>
        <taxon>Colobinae</taxon>
        <taxon>Colobus</taxon>
    </lineage>
</organism>
<accession>P19885</accession>
<sequence length="147" mass="15984">MVHLTPDEKAAVTALWGKVNVDEVGGEALGRLLVVYPWTQRFFESFGDLSSPDAVMGNPKVKAHGKKVLGAFSDGLAHLDNLKGTFAQLSELHCDKLHVDPENFKLLGNVLVCVLAHHFGKEFTPQVQAAYQKVVAGVANALAHKYH</sequence>
<name>HBB_COLPO</name>
<evidence type="ECO:0000250" key="1">
    <source>
        <dbReference type="UniProtKB" id="P02086"/>
    </source>
</evidence>
<evidence type="ECO:0000250" key="2">
    <source>
        <dbReference type="UniProtKB" id="P68871"/>
    </source>
</evidence>
<evidence type="ECO:0000255" key="3">
    <source>
        <dbReference type="PROSITE-ProRule" id="PRU00238"/>
    </source>
</evidence>
<gene>
    <name type="primary">HBB</name>
</gene>
<feature type="initiator methionine" description="Removed" evidence="1">
    <location>
        <position position="1"/>
    </location>
</feature>
<feature type="chain" id="PRO_0000052932" description="Hemoglobin subunit beta">
    <location>
        <begin position="2"/>
        <end position="147"/>
    </location>
</feature>
<feature type="domain" description="Globin" evidence="3">
    <location>
        <begin position="3"/>
        <end position="147"/>
    </location>
</feature>
<feature type="binding site" description="distal binding residue">
    <location>
        <position position="64"/>
    </location>
    <ligand>
        <name>heme b</name>
        <dbReference type="ChEBI" id="CHEBI:60344"/>
    </ligand>
    <ligandPart>
        <name>Fe</name>
        <dbReference type="ChEBI" id="CHEBI:18248"/>
    </ligandPart>
</feature>
<feature type="binding site" description="proximal binding residue">
    <location>
        <position position="93"/>
    </location>
    <ligand>
        <name>heme b</name>
        <dbReference type="ChEBI" id="CHEBI:60344"/>
    </ligand>
    <ligandPart>
        <name>Fe</name>
        <dbReference type="ChEBI" id="CHEBI:18248"/>
    </ligandPart>
</feature>
<feature type="modified residue" description="N-acetylvaline" evidence="1">
    <location>
        <position position="2"/>
    </location>
</feature>
<feature type="modified residue" description="Phosphothreonine" evidence="2">
    <location>
        <position position="13"/>
    </location>
</feature>
<feature type="modified residue" description="Phosphoserine" evidence="2">
    <location>
        <position position="45"/>
    </location>
</feature>
<feature type="modified residue" description="N6-acetyllysine" evidence="2">
    <location>
        <position position="60"/>
    </location>
</feature>
<feature type="modified residue" description="N6-acetyllysine" evidence="2">
    <location>
        <position position="83"/>
    </location>
</feature>
<feature type="modified residue" description="S-nitrosocysteine" evidence="2">
    <location>
        <position position="94"/>
    </location>
</feature>
<feature type="modified residue" description="N6-acetyllysine" evidence="2">
    <location>
        <position position="145"/>
    </location>
</feature>
<keyword id="KW-0007">Acetylation</keyword>
<keyword id="KW-0349">Heme</keyword>
<keyword id="KW-0408">Iron</keyword>
<keyword id="KW-0479">Metal-binding</keyword>
<keyword id="KW-0561">Oxygen transport</keyword>
<keyword id="KW-0597">Phosphoprotein</keyword>
<keyword id="KW-0702">S-nitrosylation</keyword>
<keyword id="KW-0813">Transport</keyword>
<protein>
    <recommendedName>
        <fullName>Hemoglobin subunit beta</fullName>
    </recommendedName>
    <alternativeName>
        <fullName>Beta-globin</fullName>
    </alternativeName>
    <alternativeName>
        <fullName>Hemoglobin beta chain</fullName>
    </alternativeName>
</protein>
<dbReference type="EMBL" id="J00330">
    <property type="status" value="NOT_ANNOTATED_CDS"/>
    <property type="molecule type" value="Genomic_DNA"/>
</dbReference>
<dbReference type="PIR" id="S04615">
    <property type="entry name" value="S04615"/>
</dbReference>
<dbReference type="SMR" id="P19885"/>
<dbReference type="GO" id="GO:0072562">
    <property type="term" value="C:blood microparticle"/>
    <property type="evidence" value="ECO:0007669"/>
    <property type="project" value="TreeGrafter"/>
</dbReference>
<dbReference type="GO" id="GO:0031838">
    <property type="term" value="C:haptoglobin-hemoglobin complex"/>
    <property type="evidence" value="ECO:0007669"/>
    <property type="project" value="TreeGrafter"/>
</dbReference>
<dbReference type="GO" id="GO:0005833">
    <property type="term" value="C:hemoglobin complex"/>
    <property type="evidence" value="ECO:0007669"/>
    <property type="project" value="InterPro"/>
</dbReference>
<dbReference type="GO" id="GO:0031720">
    <property type="term" value="F:haptoglobin binding"/>
    <property type="evidence" value="ECO:0007669"/>
    <property type="project" value="TreeGrafter"/>
</dbReference>
<dbReference type="GO" id="GO:0020037">
    <property type="term" value="F:heme binding"/>
    <property type="evidence" value="ECO:0007669"/>
    <property type="project" value="InterPro"/>
</dbReference>
<dbReference type="GO" id="GO:0031721">
    <property type="term" value="F:hemoglobin alpha binding"/>
    <property type="evidence" value="ECO:0007669"/>
    <property type="project" value="TreeGrafter"/>
</dbReference>
<dbReference type="GO" id="GO:0046872">
    <property type="term" value="F:metal ion binding"/>
    <property type="evidence" value="ECO:0007669"/>
    <property type="project" value="UniProtKB-KW"/>
</dbReference>
<dbReference type="GO" id="GO:0043177">
    <property type="term" value="F:organic acid binding"/>
    <property type="evidence" value="ECO:0007669"/>
    <property type="project" value="TreeGrafter"/>
</dbReference>
<dbReference type="GO" id="GO:0019825">
    <property type="term" value="F:oxygen binding"/>
    <property type="evidence" value="ECO:0007669"/>
    <property type="project" value="InterPro"/>
</dbReference>
<dbReference type="GO" id="GO:0005344">
    <property type="term" value="F:oxygen carrier activity"/>
    <property type="evidence" value="ECO:0007669"/>
    <property type="project" value="UniProtKB-KW"/>
</dbReference>
<dbReference type="GO" id="GO:0004601">
    <property type="term" value="F:peroxidase activity"/>
    <property type="evidence" value="ECO:0007669"/>
    <property type="project" value="TreeGrafter"/>
</dbReference>
<dbReference type="GO" id="GO:0042744">
    <property type="term" value="P:hydrogen peroxide catabolic process"/>
    <property type="evidence" value="ECO:0007669"/>
    <property type="project" value="TreeGrafter"/>
</dbReference>
<dbReference type="CDD" id="cd08925">
    <property type="entry name" value="Hb-beta-like"/>
    <property type="match status" value="1"/>
</dbReference>
<dbReference type="FunFam" id="1.10.490.10:FF:000001">
    <property type="entry name" value="Hemoglobin subunit beta"/>
    <property type="match status" value="1"/>
</dbReference>
<dbReference type="Gene3D" id="1.10.490.10">
    <property type="entry name" value="Globins"/>
    <property type="match status" value="1"/>
</dbReference>
<dbReference type="InterPro" id="IPR000971">
    <property type="entry name" value="Globin"/>
</dbReference>
<dbReference type="InterPro" id="IPR009050">
    <property type="entry name" value="Globin-like_sf"/>
</dbReference>
<dbReference type="InterPro" id="IPR012292">
    <property type="entry name" value="Globin/Proto"/>
</dbReference>
<dbReference type="InterPro" id="IPR002337">
    <property type="entry name" value="Hemoglobin_b"/>
</dbReference>
<dbReference type="InterPro" id="IPR050056">
    <property type="entry name" value="Hemoglobin_oxygen_transport"/>
</dbReference>
<dbReference type="PANTHER" id="PTHR11442">
    <property type="entry name" value="HEMOGLOBIN FAMILY MEMBER"/>
    <property type="match status" value="1"/>
</dbReference>
<dbReference type="PANTHER" id="PTHR11442:SF42">
    <property type="entry name" value="HEMOGLOBIN SUBUNIT BETA"/>
    <property type="match status" value="1"/>
</dbReference>
<dbReference type="Pfam" id="PF00042">
    <property type="entry name" value="Globin"/>
    <property type="match status" value="1"/>
</dbReference>
<dbReference type="PRINTS" id="PR00814">
    <property type="entry name" value="BETAHAEM"/>
</dbReference>
<dbReference type="SUPFAM" id="SSF46458">
    <property type="entry name" value="Globin-like"/>
    <property type="match status" value="1"/>
</dbReference>
<dbReference type="PROSITE" id="PS01033">
    <property type="entry name" value="GLOBIN"/>
    <property type="match status" value="1"/>
</dbReference>
<comment type="function">
    <text>Involved in oxygen transport from the lung to the various peripheral tissues.</text>
</comment>
<comment type="subunit">
    <text>Heterotetramer of two alpha chains and two beta chains.</text>
</comment>
<comment type="tissue specificity">
    <text>Red blood cells.</text>
</comment>
<comment type="similarity">
    <text evidence="3">Belongs to the globin family.</text>
</comment>
<proteinExistence type="evidence at transcript level"/>
<reference key="1">
    <citation type="journal article" date="1989" name="J. Mol. Biol.">
        <title>Evolution and transcription of old world monkey globin genes.</title>
        <authorList>
            <person name="Vincent K.A."/>
            <person name="Wilson A.C."/>
        </authorList>
    </citation>
    <scope>NUCLEOTIDE SEQUENCE [GENOMIC DNA]</scope>
</reference>